<protein>
    <recommendedName>
        <fullName evidence="1">Large ribosomal subunit protein bL36A</fullName>
    </recommendedName>
    <alternativeName>
        <fullName evidence="2">50S ribosomal protein L36 1</fullName>
    </alternativeName>
</protein>
<gene>
    <name evidence="1" type="primary">rpmJ1</name>
    <name type="ordered locus">Arth_2943</name>
</gene>
<accession>A0JZ52</accession>
<evidence type="ECO:0000255" key="1">
    <source>
        <dbReference type="HAMAP-Rule" id="MF_00251"/>
    </source>
</evidence>
<evidence type="ECO:0000305" key="2"/>
<sequence>MKVKPSVKQICEKCKVIRRNGRVMVICENPRHKQRQG</sequence>
<organism>
    <name type="scientific">Arthrobacter sp. (strain FB24)</name>
    <dbReference type="NCBI Taxonomy" id="290399"/>
    <lineage>
        <taxon>Bacteria</taxon>
        <taxon>Bacillati</taxon>
        <taxon>Actinomycetota</taxon>
        <taxon>Actinomycetes</taxon>
        <taxon>Micrococcales</taxon>
        <taxon>Micrococcaceae</taxon>
        <taxon>Arthrobacter</taxon>
    </lineage>
</organism>
<feature type="chain" id="PRO_0000344644" description="Large ribosomal subunit protein bL36A">
    <location>
        <begin position="1"/>
        <end position="37"/>
    </location>
</feature>
<keyword id="KW-1185">Reference proteome</keyword>
<keyword id="KW-0687">Ribonucleoprotein</keyword>
<keyword id="KW-0689">Ribosomal protein</keyword>
<dbReference type="EMBL" id="CP000454">
    <property type="protein sequence ID" value="ABK04322.1"/>
    <property type="molecule type" value="Genomic_DNA"/>
</dbReference>
<dbReference type="SMR" id="A0JZ52"/>
<dbReference type="STRING" id="290399.Arth_2943"/>
<dbReference type="KEGG" id="art:Arth_2943"/>
<dbReference type="eggNOG" id="COG0257">
    <property type="taxonomic scope" value="Bacteria"/>
</dbReference>
<dbReference type="HOGENOM" id="CLU_135723_6_2_11"/>
<dbReference type="OrthoDB" id="9802520at2"/>
<dbReference type="Proteomes" id="UP000000754">
    <property type="component" value="Chromosome"/>
</dbReference>
<dbReference type="GO" id="GO:0005737">
    <property type="term" value="C:cytoplasm"/>
    <property type="evidence" value="ECO:0007669"/>
    <property type="project" value="UniProtKB-ARBA"/>
</dbReference>
<dbReference type="GO" id="GO:1990904">
    <property type="term" value="C:ribonucleoprotein complex"/>
    <property type="evidence" value="ECO:0007669"/>
    <property type="project" value="UniProtKB-KW"/>
</dbReference>
<dbReference type="GO" id="GO:0005840">
    <property type="term" value="C:ribosome"/>
    <property type="evidence" value="ECO:0007669"/>
    <property type="project" value="UniProtKB-KW"/>
</dbReference>
<dbReference type="GO" id="GO:0003735">
    <property type="term" value="F:structural constituent of ribosome"/>
    <property type="evidence" value="ECO:0007669"/>
    <property type="project" value="InterPro"/>
</dbReference>
<dbReference type="GO" id="GO:0006412">
    <property type="term" value="P:translation"/>
    <property type="evidence" value="ECO:0007669"/>
    <property type="project" value="UniProtKB-UniRule"/>
</dbReference>
<dbReference type="HAMAP" id="MF_00251">
    <property type="entry name" value="Ribosomal_bL36"/>
    <property type="match status" value="1"/>
</dbReference>
<dbReference type="InterPro" id="IPR000473">
    <property type="entry name" value="Ribosomal_bL36"/>
</dbReference>
<dbReference type="InterPro" id="IPR035977">
    <property type="entry name" value="Ribosomal_bL36_sp"/>
</dbReference>
<dbReference type="NCBIfam" id="TIGR01022">
    <property type="entry name" value="rpmJ_bact"/>
    <property type="match status" value="1"/>
</dbReference>
<dbReference type="PANTHER" id="PTHR42888">
    <property type="entry name" value="50S RIBOSOMAL PROTEIN L36, CHLOROPLASTIC"/>
    <property type="match status" value="1"/>
</dbReference>
<dbReference type="PANTHER" id="PTHR42888:SF1">
    <property type="entry name" value="LARGE RIBOSOMAL SUBUNIT PROTEIN BL36C"/>
    <property type="match status" value="1"/>
</dbReference>
<dbReference type="Pfam" id="PF00444">
    <property type="entry name" value="Ribosomal_L36"/>
    <property type="match status" value="1"/>
</dbReference>
<dbReference type="SUPFAM" id="SSF57840">
    <property type="entry name" value="Ribosomal protein L36"/>
    <property type="match status" value="1"/>
</dbReference>
<dbReference type="PROSITE" id="PS00828">
    <property type="entry name" value="RIBOSOMAL_L36"/>
    <property type="match status" value="1"/>
</dbReference>
<comment type="similarity">
    <text evidence="1">Belongs to the bacterial ribosomal protein bL36 family.</text>
</comment>
<name>RL361_ARTS2</name>
<proteinExistence type="inferred from homology"/>
<reference key="1">
    <citation type="journal article" date="2013" name="Stand. Genomic Sci.">
        <title>Complete genome sequence of Arthrobacter sp. strain FB24.</title>
        <authorList>
            <person name="Nakatsu C.H."/>
            <person name="Barabote R."/>
            <person name="Thompson S."/>
            <person name="Bruce D."/>
            <person name="Detter C."/>
            <person name="Brettin T."/>
            <person name="Han C."/>
            <person name="Beasley F."/>
            <person name="Chen W."/>
            <person name="Konopka A."/>
            <person name="Xie G."/>
        </authorList>
    </citation>
    <scope>NUCLEOTIDE SEQUENCE [LARGE SCALE GENOMIC DNA]</scope>
    <source>
        <strain>FB24</strain>
    </source>
</reference>